<dbReference type="EC" id="3.2.1.4"/>
<dbReference type="EMBL" id="AC016041">
    <property type="protein sequence ID" value="AAF69707.1"/>
    <property type="molecule type" value="Genomic_DNA"/>
</dbReference>
<dbReference type="EMBL" id="CP002684">
    <property type="protein sequence ID" value="AEE32368.1"/>
    <property type="molecule type" value="Genomic_DNA"/>
</dbReference>
<dbReference type="EMBL" id="BT002935">
    <property type="protein sequence ID" value="AAO22749.1"/>
    <property type="molecule type" value="mRNA"/>
</dbReference>
<dbReference type="EMBL" id="BT005638">
    <property type="protein sequence ID" value="AAO64058.1"/>
    <property type="molecule type" value="mRNA"/>
</dbReference>
<dbReference type="PIR" id="B96527">
    <property type="entry name" value="B96527"/>
</dbReference>
<dbReference type="RefSeq" id="NP_175323.1">
    <property type="nucleotide sequence ID" value="NM_103786.3"/>
</dbReference>
<dbReference type="SMR" id="Q9M995"/>
<dbReference type="BioGRID" id="26540">
    <property type="interactions" value="1"/>
</dbReference>
<dbReference type="FunCoup" id="Q9M995">
    <property type="interactions" value="170"/>
</dbReference>
<dbReference type="IntAct" id="Q9M995">
    <property type="interactions" value="1"/>
</dbReference>
<dbReference type="STRING" id="3702.Q9M995"/>
<dbReference type="CAZy" id="CBM49">
    <property type="family name" value="Carbohydrate-Binding Module Family 49"/>
</dbReference>
<dbReference type="CAZy" id="GH9">
    <property type="family name" value="Glycoside Hydrolase Family 9"/>
</dbReference>
<dbReference type="GlyGen" id="Q9M995">
    <property type="glycosylation" value="3 sites"/>
</dbReference>
<dbReference type="PaxDb" id="3702-AT1G48930.1"/>
<dbReference type="ProteomicsDB" id="247318"/>
<dbReference type="EnsemblPlants" id="AT1G48930.1">
    <property type="protein sequence ID" value="AT1G48930.1"/>
    <property type="gene ID" value="AT1G48930"/>
</dbReference>
<dbReference type="GeneID" id="841315"/>
<dbReference type="Gramene" id="AT1G48930.1">
    <property type="protein sequence ID" value="AT1G48930.1"/>
    <property type="gene ID" value="AT1G48930"/>
</dbReference>
<dbReference type="KEGG" id="ath:AT1G48930"/>
<dbReference type="Araport" id="AT1G48930"/>
<dbReference type="TAIR" id="AT1G48930">
    <property type="gene designation" value="GH9C1"/>
</dbReference>
<dbReference type="eggNOG" id="ENOG502QRF6">
    <property type="taxonomic scope" value="Eukaryota"/>
</dbReference>
<dbReference type="HOGENOM" id="CLU_008926_1_4_1"/>
<dbReference type="InParanoid" id="Q9M995"/>
<dbReference type="OMA" id="AFRPYDS"/>
<dbReference type="PhylomeDB" id="Q9M995"/>
<dbReference type="BioCyc" id="ARA:AT1G48930-MONOMER"/>
<dbReference type="PRO" id="PR:Q9M995"/>
<dbReference type="Proteomes" id="UP000006548">
    <property type="component" value="Chromosome 1"/>
</dbReference>
<dbReference type="ExpressionAtlas" id="Q9M995">
    <property type="expression patterns" value="baseline and differential"/>
</dbReference>
<dbReference type="GO" id="GO:0005576">
    <property type="term" value="C:extracellular region"/>
    <property type="evidence" value="ECO:0007669"/>
    <property type="project" value="UniProtKB-SubCell"/>
</dbReference>
<dbReference type="GO" id="GO:0030246">
    <property type="term" value="F:carbohydrate binding"/>
    <property type="evidence" value="ECO:0007669"/>
    <property type="project" value="InterPro"/>
</dbReference>
<dbReference type="GO" id="GO:0008810">
    <property type="term" value="F:cellulase activity"/>
    <property type="evidence" value="ECO:0007669"/>
    <property type="project" value="UniProtKB-EC"/>
</dbReference>
<dbReference type="GO" id="GO:0071555">
    <property type="term" value="P:cell wall organization"/>
    <property type="evidence" value="ECO:0007669"/>
    <property type="project" value="UniProtKB-KW"/>
</dbReference>
<dbReference type="GO" id="GO:0030245">
    <property type="term" value="P:cellulose catabolic process"/>
    <property type="evidence" value="ECO:0007669"/>
    <property type="project" value="UniProtKB-KW"/>
</dbReference>
<dbReference type="FunFam" id="1.50.10.10:FF:000020">
    <property type="entry name" value="Endoglucanase"/>
    <property type="match status" value="1"/>
</dbReference>
<dbReference type="Gene3D" id="1.50.10.10">
    <property type="match status" value="1"/>
</dbReference>
<dbReference type="InterPro" id="IPR008928">
    <property type="entry name" value="6-hairpin_glycosidase_sf"/>
</dbReference>
<dbReference type="InterPro" id="IPR012341">
    <property type="entry name" value="6hp_glycosidase-like_sf"/>
</dbReference>
<dbReference type="InterPro" id="IPR019028">
    <property type="entry name" value="CBM_49"/>
</dbReference>
<dbReference type="InterPro" id="IPR001701">
    <property type="entry name" value="Glyco_hydro_9"/>
</dbReference>
<dbReference type="InterPro" id="IPR018221">
    <property type="entry name" value="Glyco_hydro_9_His_AS"/>
</dbReference>
<dbReference type="PANTHER" id="PTHR22298">
    <property type="entry name" value="ENDO-1,4-BETA-GLUCANASE"/>
    <property type="match status" value="1"/>
</dbReference>
<dbReference type="Pfam" id="PF09478">
    <property type="entry name" value="CBM49"/>
    <property type="match status" value="1"/>
</dbReference>
<dbReference type="Pfam" id="PF00759">
    <property type="entry name" value="Glyco_hydro_9"/>
    <property type="match status" value="1"/>
</dbReference>
<dbReference type="SMART" id="SM01063">
    <property type="entry name" value="CBM49"/>
    <property type="match status" value="1"/>
</dbReference>
<dbReference type="SUPFAM" id="SSF48208">
    <property type="entry name" value="Six-hairpin glycosidases"/>
    <property type="match status" value="1"/>
</dbReference>
<dbReference type="PROSITE" id="PS60032">
    <property type="entry name" value="GH9_1"/>
    <property type="match status" value="1"/>
</dbReference>
<dbReference type="PROSITE" id="PS00592">
    <property type="entry name" value="GH9_2"/>
    <property type="match status" value="1"/>
</dbReference>
<keyword id="KW-0119">Carbohydrate metabolism</keyword>
<keyword id="KW-0961">Cell wall biogenesis/degradation</keyword>
<keyword id="KW-0136">Cellulose degradation</keyword>
<keyword id="KW-0325">Glycoprotein</keyword>
<keyword id="KW-0326">Glycosidase</keyword>
<keyword id="KW-0378">Hydrolase</keyword>
<keyword id="KW-0624">Polysaccharide degradation</keyword>
<keyword id="KW-1185">Reference proteome</keyword>
<keyword id="KW-0964">Secreted</keyword>
<keyword id="KW-0732">Signal</keyword>
<accession>Q9M995</accession>
<organism>
    <name type="scientific">Arabidopsis thaliana</name>
    <name type="common">Mouse-ear cress</name>
    <dbReference type="NCBI Taxonomy" id="3702"/>
    <lineage>
        <taxon>Eukaryota</taxon>
        <taxon>Viridiplantae</taxon>
        <taxon>Streptophyta</taxon>
        <taxon>Embryophyta</taxon>
        <taxon>Tracheophyta</taxon>
        <taxon>Spermatophyta</taxon>
        <taxon>Magnoliopsida</taxon>
        <taxon>eudicotyledons</taxon>
        <taxon>Gunneridae</taxon>
        <taxon>Pentapetalae</taxon>
        <taxon>rosids</taxon>
        <taxon>malvids</taxon>
        <taxon>Brassicales</taxon>
        <taxon>Brassicaceae</taxon>
        <taxon>Camelineae</taxon>
        <taxon>Arabidopsis</taxon>
    </lineage>
</organism>
<reference key="1">
    <citation type="journal article" date="2000" name="Nature">
        <title>Sequence and analysis of chromosome 1 of the plant Arabidopsis thaliana.</title>
        <authorList>
            <person name="Theologis A."/>
            <person name="Ecker J.R."/>
            <person name="Palm C.J."/>
            <person name="Federspiel N.A."/>
            <person name="Kaul S."/>
            <person name="White O."/>
            <person name="Alonso J."/>
            <person name="Altafi H."/>
            <person name="Araujo R."/>
            <person name="Bowman C.L."/>
            <person name="Brooks S.Y."/>
            <person name="Buehler E."/>
            <person name="Chan A."/>
            <person name="Chao Q."/>
            <person name="Chen H."/>
            <person name="Cheuk R.F."/>
            <person name="Chin C.W."/>
            <person name="Chung M.K."/>
            <person name="Conn L."/>
            <person name="Conway A.B."/>
            <person name="Conway A.R."/>
            <person name="Creasy T.H."/>
            <person name="Dewar K."/>
            <person name="Dunn P."/>
            <person name="Etgu P."/>
            <person name="Feldblyum T.V."/>
            <person name="Feng J.-D."/>
            <person name="Fong B."/>
            <person name="Fujii C.Y."/>
            <person name="Gill J.E."/>
            <person name="Goldsmith A.D."/>
            <person name="Haas B."/>
            <person name="Hansen N.F."/>
            <person name="Hughes B."/>
            <person name="Huizar L."/>
            <person name="Hunter J.L."/>
            <person name="Jenkins J."/>
            <person name="Johnson-Hopson C."/>
            <person name="Khan S."/>
            <person name="Khaykin E."/>
            <person name="Kim C.J."/>
            <person name="Koo H.L."/>
            <person name="Kremenetskaia I."/>
            <person name="Kurtz D.B."/>
            <person name="Kwan A."/>
            <person name="Lam B."/>
            <person name="Langin-Hooper S."/>
            <person name="Lee A."/>
            <person name="Lee J.M."/>
            <person name="Lenz C.A."/>
            <person name="Li J.H."/>
            <person name="Li Y.-P."/>
            <person name="Lin X."/>
            <person name="Liu S.X."/>
            <person name="Liu Z.A."/>
            <person name="Luros J.S."/>
            <person name="Maiti R."/>
            <person name="Marziali A."/>
            <person name="Militscher J."/>
            <person name="Miranda M."/>
            <person name="Nguyen M."/>
            <person name="Nierman W.C."/>
            <person name="Osborne B.I."/>
            <person name="Pai G."/>
            <person name="Peterson J."/>
            <person name="Pham P.K."/>
            <person name="Rizzo M."/>
            <person name="Rooney T."/>
            <person name="Rowley D."/>
            <person name="Sakano H."/>
            <person name="Salzberg S.L."/>
            <person name="Schwartz J.R."/>
            <person name="Shinn P."/>
            <person name="Southwick A.M."/>
            <person name="Sun H."/>
            <person name="Tallon L.J."/>
            <person name="Tambunga G."/>
            <person name="Toriumi M.J."/>
            <person name="Town C.D."/>
            <person name="Utterback T."/>
            <person name="Van Aken S."/>
            <person name="Vaysberg M."/>
            <person name="Vysotskaia V.S."/>
            <person name="Walker M."/>
            <person name="Wu D."/>
            <person name="Yu G."/>
            <person name="Fraser C.M."/>
            <person name="Venter J.C."/>
            <person name="Davis R.W."/>
        </authorList>
    </citation>
    <scope>NUCLEOTIDE SEQUENCE [LARGE SCALE GENOMIC DNA]</scope>
    <source>
        <strain>cv. Columbia</strain>
    </source>
</reference>
<reference key="2">
    <citation type="journal article" date="2017" name="Plant J.">
        <title>Araport11: a complete reannotation of the Arabidopsis thaliana reference genome.</title>
        <authorList>
            <person name="Cheng C.Y."/>
            <person name="Krishnakumar V."/>
            <person name="Chan A.P."/>
            <person name="Thibaud-Nissen F."/>
            <person name="Schobel S."/>
            <person name="Town C.D."/>
        </authorList>
    </citation>
    <scope>GENOME REANNOTATION</scope>
    <source>
        <strain>cv. Columbia</strain>
    </source>
</reference>
<reference key="3">
    <citation type="journal article" date="2003" name="Science">
        <title>Empirical analysis of transcriptional activity in the Arabidopsis genome.</title>
        <authorList>
            <person name="Yamada K."/>
            <person name="Lim J."/>
            <person name="Dale J.M."/>
            <person name="Chen H."/>
            <person name="Shinn P."/>
            <person name="Palm C.J."/>
            <person name="Southwick A.M."/>
            <person name="Wu H.C."/>
            <person name="Kim C.J."/>
            <person name="Nguyen M."/>
            <person name="Pham P.K."/>
            <person name="Cheuk R.F."/>
            <person name="Karlin-Newmann G."/>
            <person name="Liu S.X."/>
            <person name="Lam B."/>
            <person name="Sakano H."/>
            <person name="Wu T."/>
            <person name="Yu G."/>
            <person name="Miranda M."/>
            <person name="Quach H.L."/>
            <person name="Tripp M."/>
            <person name="Chang C.H."/>
            <person name="Lee J.M."/>
            <person name="Toriumi M.J."/>
            <person name="Chan M.M."/>
            <person name="Tang C.C."/>
            <person name="Onodera C.S."/>
            <person name="Deng J.M."/>
            <person name="Akiyama K."/>
            <person name="Ansari Y."/>
            <person name="Arakawa T."/>
            <person name="Banh J."/>
            <person name="Banno F."/>
            <person name="Bowser L."/>
            <person name="Brooks S.Y."/>
            <person name="Carninci P."/>
            <person name="Chao Q."/>
            <person name="Choy N."/>
            <person name="Enju A."/>
            <person name="Goldsmith A.D."/>
            <person name="Gurjal M."/>
            <person name="Hansen N.F."/>
            <person name="Hayashizaki Y."/>
            <person name="Johnson-Hopson C."/>
            <person name="Hsuan V.W."/>
            <person name="Iida K."/>
            <person name="Karnes M."/>
            <person name="Khan S."/>
            <person name="Koesema E."/>
            <person name="Ishida J."/>
            <person name="Jiang P.X."/>
            <person name="Jones T."/>
            <person name="Kawai J."/>
            <person name="Kamiya A."/>
            <person name="Meyers C."/>
            <person name="Nakajima M."/>
            <person name="Narusaka M."/>
            <person name="Seki M."/>
            <person name="Sakurai T."/>
            <person name="Satou M."/>
            <person name="Tamse R."/>
            <person name="Vaysberg M."/>
            <person name="Wallender E.K."/>
            <person name="Wong C."/>
            <person name="Yamamura Y."/>
            <person name="Yuan S."/>
            <person name="Shinozaki K."/>
            <person name="Davis R.W."/>
            <person name="Theologis A."/>
            <person name="Ecker J.R."/>
        </authorList>
    </citation>
    <scope>NUCLEOTIDE SEQUENCE [LARGE SCALE MRNA]</scope>
    <source>
        <strain>cv. Columbia</strain>
    </source>
</reference>
<reference key="4">
    <citation type="journal article" date="2004" name="J. Mol. Evol.">
        <title>Phylogenetic analysis of the plant endo-beta-1,4-glucanase gene family.</title>
        <authorList>
            <person name="Libertini E."/>
            <person name="Li Y."/>
            <person name="McQueen-Mason S.J."/>
        </authorList>
    </citation>
    <scope>GENE FAMILY</scope>
</reference>
<gene>
    <name type="ordered locus">At1g48930</name>
    <name type="ORF">F27J15.28</name>
    <name type="ORF">F27K7.5</name>
</gene>
<evidence type="ECO:0000250" key="1"/>
<evidence type="ECO:0000255" key="2"/>
<evidence type="ECO:0000255" key="3">
    <source>
        <dbReference type="PROSITE-ProRule" id="PRU10059"/>
    </source>
</evidence>
<evidence type="ECO:0000255" key="4">
    <source>
        <dbReference type="PROSITE-ProRule" id="PRU10140"/>
    </source>
</evidence>
<evidence type="ECO:0000305" key="5"/>
<comment type="catalytic activity">
    <reaction>
        <text>Endohydrolysis of (1-&gt;4)-beta-D-glucosidic linkages in cellulose, lichenin and cereal beta-D-glucans.</text>
        <dbReference type="EC" id="3.2.1.4"/>
    </reaction>
</comment>
<comment type="interaction">
    <interactant intactId="EBI-25530015">
        <id>Q9M995</id>
    </interactant>
    <interactant intactId="EBI-25519488">
        <id>Q9SZU7</id>
        <label>KAI2</label>
    </interactant>
    <organismsDiffer>false</organismsDiffer>
    <experiments>3</experiments>
</comment>
<comment type="subcellular location">
    <subcellularLocation>
        <location evidence="1">Secreted</location>
    </subcellularLocation>
</comment>
<comment type="similarity">
    <text evidence="4 5">Belongs to the glycosyl hydrolase 9 (cellulase E) family.</text>
</comment>
<feature type="signal peptide" evidence="2">
    <location>
        <begin position="1"/>
        <end position="26"/>
    </location>
</feature>
<feature type="chain" id="PRO_0000249258" description="Endoglucanase 5">
    <location>
        <begin position="27"/>
        <end position="627"/>
    </location>
</feature>
<feature type="active site" description="Nucleophile" evidence="4">
    <location>
        <position position="83"/>
    </location>
</feature>
<feature type="active site" evidence="3">
    <location>
        <position position="416"/>
    </location>
</feature>
<feature type="active site" evidence="3">
    <location>
        <position position="468"/>
    </location>
</feature>
<feature type="active site" evidence="3">
    <location>
        <position position="477"/>
    </location>
</feature>
<feature type="glycosylation site" description="N-linked (GlcNAc...) asparagine" evidence="2">
    <location>
        <position position="196"/>
    </location>
</feature>
<feature type="glycosylation site" description="N-linked (GlcNAc...) asparagine" evidence="2">
    <location>
        <position position="465"/>
    </location>
</feature>
<feature type="glycosylation site" description="N-linked (GlcNAc...) asparagine" evidence="2">
    <location>
        <position position="561"/>
    </location>
</feature>
<protein>
    <recommendedName>
        <fullName>Endoglucanase 5</fullName>
        <ecNumber>3.2.1.4</ecNumber>
    </recommendedName>
    <alternativeName>
        <fullName>Endo-1,4-beta glucanase 5</fullName>
    </alternativeName>
</protein>
<name>GUN5_ARATH</name>
<sequence>MRKFGGSLFGVSLLLSVLLAAATAAAEYYNYGSALDKTFLFFEAQRSGKLPAAQRVKWRGPSGLKDGLAQGVSLEGGYYDAGDHVKFGLPMAFAVTMLSWAAVDNRKELSSSNQMQQTLWSIRWGTDYFIKAHPQPNVLWGQVGDGESDHYCWERPEDMTTSRTAYKLDPYHPGSDLAGETAAALAAASLAFKPFNSSYSALLLSHAKELFSFADKYRGLYTNSIPNAKAFYMSSGYSDELLWAAAWLHRATGDQYYLKYAMDNSGYMGGTGWGVKEFSWDNKYAGVQILLSKILLEGKGGIYTSTLKQYQTKADYFACACLKKNGGYNIQTTPGGLMYVREWNNLQYASAAAYLLAVYSDYLSAANAKLNCPDGLVQPQGLLDFARSQADYILGKNRQGMSYVVGYGPKYPIRVHHRGSSIPSIFAQRSSVSCVQGFDSWYRRSQGDPNVIYGALVGGPDENDNYSDDRSNYEQSEPTLSGTAPLVGLFAKLYGGSLGSYGGGSYKPYETTKPAASSYKATPTTYSPKQSGAQIEFLHSITSNWIAGNTRYYRHKVIIKNNSQKPISDLKLKIEDLSGPIWGLNPTGQKYTYQLPQWQKTLRAGQAYDFVYVQGGPQAKVSVLSYN</sequence>
<proteinExistence type="evidence at protein level"/>